<comment type="function">
    <text evidence="1">Destroys superoxide anion radicals which are normally produced within the cells and which are toxic to biological systems.</text>
</comment>
<comment type="catalytic activity">
    <reaction evidence="2">
        <text>2 superoxide + 2 H(+) = H2O2 + O2</text>
        <dbReference type="Rhea" id="RHEA:20696"/>
        <dbReference type="ChEBI" id="CHEBI:15378"/>
        <dbReference type="ChEBI" id="CHEBI:15379"/>
        <dbReference type="ChEBI" id="CHEBI:16240"/>
        <dbReference type="ChEBI" id="CHEBI:18421"/>
        <dbReference type="EC" id="1.15.1.1"/>
    </reaction>
</comment>
<comment type="cofactor">
    <cofactor evidence="3">
        <name>Mn(2+)</name>
        <dbReference type="ChEBI" id="CHEBI:29035"/>
    </cofactor>
    <text evidence="3">Binds 1 Mn(2+) ion per subunit.</text>
</comment>
<comment type="subunit">
    <text evidence="3">Homodimer.</text>
</comment>
<comment type="subcellular location">
    <subcellularLocation>
        <location evidence="3">Mitochondrion matrix</location>
    </subcellularLocation>
</comment>
<comment type="induction">
    <text evidence="3">By high osmolarity and heat.</text>
</comment>
<comment type="similarity">
    <text evidence="5">Belongs to the iron/manganese superoxide dismutase family.</text>
</comment>
<keyword id="KW-0049">Antioxidant</keyword>
<keyword id="KW-0903">Direct protein sequencing</keyword>
<keyword id="KW-0464">Manganese</keyword>
<keyword id="KW-0479">Metal-binding</keyword>
<keyword id="KW-0496">Mitochondrion</keyword>
<keyword id="KW-0560">Oxidoreductase</keyword>
<keyword id="KW-0597">Phosphoprotein</keyword>
<keyword id="KW-1185">Reference proteome</keyword>
<keyword id="KW-0809">Transit peptide</keyword>
<feature type="transit peptide" description="Mitochondrion" evidence="3">
    <location>
        <begin position="1"/>
        <end position="21"/>
    </location>
</feature>
<feature type="chain" id="PRO_0000032887" description="Superoxide dismutase [Mn], mitochondrial">
    <location>
        <begin position="22"/>
        <end position="218"/>
    </location>
</feature>
<feature type="binding site" evidence="1">
    <location>
        <position position="50"/>
    </location>
    <ligand>
        <name>Mn(2+)</name>
        <dbReference type="ChEBI" id="CHEBI:29035"/>
    </ligand>
</feature>
<feature type="binding site" evidence="1">
    <location>
        <position position="96"/>
    </location>
    <ligand>
        <name>Mn(2+)</name>
        <dbReference type="ChEBI" id="CHEBI:29035"/>
    </ligand>
</feature>
<feature type="binding site" evidence="1">
    <location>
        <position position="181"/>
    </location>
    <ligand>
        <name>Mn(2+)</name>
        <dbReference type="ChEBI" id="CHEBI:29035"/>
    </ligand>
</feature>
<feature type="binding site" evidence="1">
    <location>
        <position position="185"/>
    </location>
    <ligand>
        <name>Mn(2+)</name>
        <dbReference type="ChEBI" id="CHEBI:29035"/>
    </ligand>
</feature>
<feature type="modified residue" description="Phosphoserine" evidence="4">
    <location>
        <position position="129"/>
    </location>
</feature>
<evidence type="ECO:0000250" key="1">
    <source>
        <dbReference type="UniProtKB" id="P04179"/>
    </source>
</evidence>
<evidence type="ECO:0000250" key="2">
    <source>
        <dbReference type="UniProtKB" id="P0A0J3"/>
    </source>
</evidence>
<evidence type="ECO:0000269" key="3">
    <source>
    </source>
</evidence>
<evidence type="ECO:0000269" key="4">
    <source>
    </source>
</evidence>
<evidence type="ECO:0000305" key="5"/>
<proteinExistence type="evidence at protein level"/>
<dbReference type="EC" id="1.15.1.1" evidence="2"/>
<dbReference type="EMBL" id="AF069292">
    <property type="protein sequence ID" value="AAF19051.1"/>
    <property type="molecule type" value="Genomic_DNA"/>
</dbReference>
<dbReference type="EMBL" id="CU329670">
    <property type="protein sequence ID" value="CAB62411.1"/>
    <property type="molecule type" value="Genomic_DNA"/>
</dbReference>
<dbReference type="PIR" id="T50070">
    <property type="entry name" value="T50070"/>
</dbReference>
<dbReference type="RefSeq" id="NP_594089.1">
    <property type="nucleotide sequence ID" value="NM_001019513.2"/>
</dbReference>
<dbReference type="SMR" id="Q9UQX0"/>
<dbReference type="BioGRID" id="279331">
    <property type="interactions" value="35"/>
</dbReference>
<dbReference type="FunCoup" id="Q9UQX0">
    <property type="interactions" value="321"/>
</dbReference>
<dbReference type="STRING" id="284812.Q9UQX0"/>
<dbReference type="iPTMnet" id="Q9UQX0"/>
<dbReference type="PaxDb" id="4896-SPAC1486.01.1"/>
<dbReference type="EnsemblFungi" id="SPAC1486.01.1">
    <property type="protein sequence ID" value="SPAC1486.01.1:pep"/>
    <property type="gene ID" value="SPAC1486.01"/>
</dbReference>
<dbReference type="GeneID" id="2542886"/>
<dbReference type="KEGG" id="spo:2542886"/>
<dbReference type="PomBase" id="SPAC1486.01">
    <property type="gene designation" value="sod2"/>
</dbReference>
<dbReference type="VEuPathDB" id="FungiDB:SPAC1486.01"/>
<dbReference type="eggNOG" id="KOG0876">
    <property type="taxonomic scope" value="Eukaryota"/>
</dbReference>
<dbReference type="HOGENOM" id="CLU_031625_2_0_1"/>
<dbReference type="InParanoid" id="Q9UQX0"/>
<dbReference type="OMA" id="DSLINWD"/>
<dbReference type="PhylomeDB" id="Q9UQX0"/>
<dbReference type="Reactome" id="R-SPO-2151201">
    <property type="pathway name" value="Transcriptional activation of mitochondrial biogenesis"/>
</dbReference>
<dbReference type="Reactome" id="R-SPO-3299685">
    <property type="pathway name" value="Detoxification of Reactive Oxygen Species"/>
</dbReference>
<dbReference type="PRO" id="PR:Q9UQX0"/>
<dbReference type="Proteomes" id="UP000002485">
    <property type="component" value="Chromosome I"/>
</dbReference>
<dbReference type="GO" id="GO:0005759">
    <property type="term" value="C:mitochondrial matrix"/>
    <property type="evidence" value="ECO:0000266"/>
    <property type="project" value="PomBase"/>
</dbReference>
<dbReference type="GO" id="GO:0005739">
    <property type="term" value="C:mitochondrion"/>
    <property type="evidence" value="ECO:0000314"/>
    <property type="project" value="PomBase"/>
</dbReference>
<dbReference type="GO" id="GO:0030145">
    <property type="term" value="F:manganese ion binding"/>
    <property type="evidence" value="ECO:0000314"/>
    <property type="project" value="PomBase"/>
</dbReference>
<dbReference type="GO" id="GO:0004784">
    <property type="term" value="F:superoxide dismutase activity"/>
    <property type="evidence" value="ECO:0000314"/>
    <property type="project" value="PomBase"/>
</dbReference>
<dbReference type="GO" id="GO:0019430">
    <property type="term" value="P:removal of superoxide radicals"/>
    <property type="evidence" value="ECO:0000315"/>
    <property type="project" value="PomBase"/>
</dbReference>
<dbReference type="FunFam" id="1.10.287.990:FF:000001">
    <property type="entry name" value="Superoxide dismutase"/>
    <property type="match status" value="1"/>
</dbReference>
<dbReference type="FunFam" id="3.55.40.20:FF:000002">
    <property type="entry name" value="Superoxide dismutase"/>
    <property type="match status" value="1"/>
</dbReference>
<dbReference type="Gene3D" id="1.10.287.990">
    <property type="entry name" value="Fe,Mn superoxide dismutase (SOD) domain"/>
    <property type="match status" value="1"/>
</dbReference>
<dbReference type="Gene3D" id="3.55.40.20">
    <property type="entry name" value="Iron/manganese superoxide dismutase, C-terminal domain"/>
    <property type="match status" value="1"/>
</dbReference>
<dbReference type="InterPro" id="IPR050265">
    <property type="entry name" value="Fe/Mn_Superoxide_Dismutase"/>
</dbReference>
<dbReference type="InterPro" id="IPR001189">
    <property type="entry name" value="Mn/Fe_SOD"/>
</dbReference>
<dbReference type="InterPro" id="IPR019833">
    <property type="entry name" value="Mn/Fe_SOD_BS"/>
</dbReference>
<dbReference type="InterPro" id="IPR019832">
    <property type="entry name" value="Mn/Fe_SOD_C"/>
</dbReference>
<dbReference type="InterPro" id="IPR019831">
    <property type="entry name" value="Mn/Fe_SOD_N"/>
</dbReference>
<dbReference type="InterPro" id="IPR036324">
    <property type="entry name" value="Mn/Fe_SOD_N_sf"/>
</dbReference>
<dbReference type="InterPro" id="IPR036314">
    <property type="entry name" value="SOD_C_sf"/>
</dbReference>
<dbReference type="PANTHER" id="PTHR11404">
    <property type="entry name" value="SUPEROXIDE DISMUTASE 2"/>
    <property type="match status" value="1"/>
</dbReference>
<dbReference type="PANTHER" id="PTHR11404:SF6">
    <property type="entry name" value="SUPEROXIDE DISMUTASE [MN], MITOCHONDRIAL"/>
    <property type="match status" value="1"/>
</dbReference>
<dbReference type="Pfam" id="PF02777">
    <property type="entry name" value="Sod_Fe_C"/>
    <property type="match status" value="1"/>
</dbReference>
<dbReference type="Pfam" id="PF00081">
    <property type="entry name" value="Sod_Fe_N"/>
    <property type="match status" value="1"/>
</dbReference>
<dbReference type="PIRSF" id="PIRSF000349">
    <property type="entry name" value="SODismutase"/>
    <property type="match status" value="1"/>
</dbReference>
<dbReference type="PRINTS" id="PR01703">
    <property type="entry name" value="MNSODISMTASE"/>
</dbReference>
<dbReference type="SUPFAM" id="SSF54719">
    <property type="entry name" value="Fe,Mn superoxide dismutase (SOD), C-terminal domain"/>
    <property type="match status" value="1"/>
</dbReference>
<dbReference type="SUPFAM" id="SSF46609">
    <property type="entry name" value="Fe,Mn superoxide dismutase (SOD), N-terminal domain"/>
    <property type="match status" value="1"/>
</dbReference>
<dbReference type="PROSITE" id="PS00088">
    <property type="entry name" value="SOD_MN"/>
    <property type="match status" value="1"/>
</dbReference>
<organism>
    <name type="scientific">Schizosaccharomyces pombe (strain 972 / ATCC 24843)</name>
    <name type="common">Fission yeast</name>
    <dbReference type="NCBI Taxonomy" id="284812"/>
    <lineage>
        <taxon>Eukaryota</taxon>
        <taxon>Fungi</taxon>
        <taxon>Dikarya</taxon>
        <taxon>Ascomycota</taxon>
        <taxon>Taphrinomycotina</taxon>
        <taxon>Schizosaccharomycetes</taxon>
        <taxon>Schizosaccharomycetales</taxon>
        <taxon>Schizosaccharomycetaceae</taxon>
        <taxon>Schizosaccharomyces</taxon>
    </lineage>
</organism>
<gene>
    <name type="primary">sod2</name>
    <name type="ORF">SPAC1486.01</name>
</gene>
<protein>
    <recommendedName>
        <fullName>Superoxide dismutase [Mn], mitochondrial</fullName>
        <ecNumber evidence="2">1.15.1.1</ecNumber>
    </recommendedName>
</protein>
<accession>Q9UQX0</accession>
<name>SODM_SCHPO</name>
<sequence>MLRFLSKNSVAAIRNVSIARGVHTKATLPPLPYAYNALEPALSETIMKLHHDKHHQTYVNNLNAAQEKLADPNLDLEGEVALQAAIKFNGGGHINHSLFWKILAPQKEGGGKPVTSGSLHKAITSKWGSLEDFQKEMNAALASIQGSGWAWLIVDKDGSLRITTTANQDTIVKSKPIIGIDAWEHAYYPQYENRKAEYFKAIWNVINWKEAESRYSNR</sequence>
<reference key="1">
    <citation type="journal article" date="2001" name="J. Microbiol.">
        <title>Isolation and characterization of the sod2+ gene encoding a putative mitochondrial manganese superoxide dismutase in Schizosaccharomyces pombe.</title>
        <authorList>
            <person name="Jeong J.-H."/>
            <person name="Kwon E.-S."/>
            <person name="Roe J.-H."/>
        </authorList>
    </citation>
    <scope>NUCLEOTIDE SEQUENCE [GENOMIC DNA]</scope>
    <source>
        <strain>972 / ATCC 24843</strain>
    </source>
</reference>
<reference key="2">
    <citation type="journal article" date="2002" name="Nature">
        <title>The genome sequence of Schizosaccharomyces pombe.</title>
        <authorList>
            <person name="Wood V."/>
            <person name="Gwilliam R."/>
            <person name="Rajandream M.A."/>
            <person name="Lyne M.H."/>
            <person name="Lyne R."/>
            <person name="Stewart A."/>
            <person name="Sgouros J.G."/>
            <person name="Peat N."/>
            <person name="Hayles J."/>
            <person name="Baker S.G."/>
            <person name="Basham D."/>
            <person name="Bowman S."/>
            <person name="Brooks K."/>
            <person name="Brown D."/>
            <person name="Brown S."/>
            <person name="Chillingworth T."/>
            <person name="Churcher C.M."/>
            <person name="Collins M."/>
            <person name="Connor R."/>
            <person name="Cronin A."/>
            <person name="Davis P."/>
            <person name="Feltwell T."/>
            <person name="Fraser A."/>
            <person name="Gentles S."/>
            <person name="Goble A."/>
            <person name="Hamlin N."/>
            <person name="Harris D.E."/>
            <person name="Hidalgo J."/>
            <person name="Hodgson G."/>
            <person name="Holroyd S."/>
            <person name="Hornsby T."/>
            <person name="Howarth S."/>
            <person name="Huckle E.J."/>
            <person name="Hunt S."/>
            <person name="Jagels K."/>
            <person name="James K.D."/>
            <person name="Jones L."/>
            <person name="Jones M."/>
            <person name="Leather S."/>
            <person name="McDonald S."/>
            <person name="McLean J."/>
            <person name="Mooney P."/>
            <person name="Moule S."/>
            <person name="Mungall K.L."/>
            <person name="Murphy L.D."/>
            <person name="Niblett D."/>
            <person name="Odell C."/>
            <person name="Oliver K."/>
            <person name="O'Neil S."/>
            <person name="Pearson D."/>
            <person name="Quail M.A."/>
            <person name="Rabbinowitsch E."/>
            <person name="Rutherford K.M."/>
            <person name="Rutter S."/>
            <person name="Saunders D."/>
            <person name="Seeger K."/>
            <person name="Sharp S."/>
            <person name="Skelton J."/>
            <person name="Simmonds M.N."/>
            <person name="Squares R."/>
            <person name="Squares S."/>
            <person name="Stevens K."/>
            <person name="Taylor K."/>
            <person name="Taylor R.G."/>
            <person name="Tivey A."/>
            <person name="Walsh S.V."/>
            <person name="Warren T."/>
            <person name="Whitehead S."/>
            <person name="Woodward J.R."/>
            <person name="Volckaert G."/>
            <person name="Aert R."/>
            <person name="Robben J."/>
            <person name="Grymonprez B."/>
            <person name="Weltjens I."/>
            <person name="Vanstreels E."/>
            <person name="Rieger M."/>
            <person name="Schaefer M."/>
            <person name="Mueller-Auer S."/>
            <person name="Gabel C."/>
            <person name="Fuchs M."/>
            <person name="Duesterhoeft A."/>
            <person name="Fritzc C."/>
            <person name="Holzer E."/>
            <person name="Moestl D."/>
            <person name="Hilbert H."/>
            <person name="Borzym K."/>
            <person name="Langer I."/>
            <person name="Beck A."/>
            <person name="Lehrach H."/>
            <person name="Reinhardt R."/>
            <person name="Pohl T.M."/>
            <person name="Eger P."/>
            <person name="Zimmermann W."/>
            <person name="Wedler H."/>
            <person name="Wambutt R."/>
            <person name="Purnelle B."/>
            <person name="Goffeau A."/>
            <person name="Cadieu E."/>
            <person name="Dreano S."/>
            <person name="Gloux S."/>
            <person name="Lelaure V."/>
            <person name="Mottier S."/>
            <person name="Galibert F."/>
            <person name="Aves S.J."/>
            <person name="Xiang Z."/>
            <person name="Hunt C."/>
            <person name="Moore K."/>
            <person name="Hurst S.M."/>
            <person name="Lucas M."/>
            <person name="Rochet M."/>
            <person name="Gaillardin C."/>
            <person name="Tallada V.A."/>
            <person name="Garzon A."/>
            <person name="Thode G."/>
            <person name="Daga R.R."/>
            <person name="Cruzado L."/>
            <person name="Jimenez J."/>
            <person name="Sanchez M."/>
            <person name="del Rey F."/>
            <person name="Benito J."/>
            <person name="Dominguez A."/>
            <person name="Revuelta J.L."/>
            <person name="Moreno S."/>
            <person name="Armstrong J."/>
            <person name="Forsburg S.L."/>
            <person name="Cerutti L."/>
            <person name="Lowe T."/>
            <person name="McCombie W.R."/>
            <person name="Paulsen I."/>
            <person name="Potashkin J."/>
            <person name="Shpakovski G.V."/>
            <person name="Ussery D."/>
            <person name="Barrell B.G."/>
            <person name="Nurse P."/>
        </authorList>
    </citation>
    <scope>NUCLEOTIDE SEQUENCE [LARGE SCALE GENOMIC DNA]</scope>
    <source>
        <strain>972 / ATCC 24843</strain>
    </source>
</reference>
<reference key="3">
    <citation type="journal article" date="2001" name="Biochem. Biophys. Res. Commun.">
        <title>Characterization of the manganese-containing superoxide dismutase and its gene regulation in stress response of Schizosaccharomyces pombe.</title>
        <authorList>
            <person name="Jeong J.-H."/>
            <person name="Kwon E.-S."/>
            <person name="Roe J.-H."/>
        </authorList>
    </citation>
    <scope>PROTEIN SEQUENCE OF 22-34</scope>
    <scope>COFACTOR</scope>
    <scope>SUBUNIT</scope>
    <scope>SUBCELLULAR LOCATION</scope>
    <scope>INDUCTION</scope>
    <source>
        <strain>JH201</strain>
    </source>
</reference>
<reference key="4">
    <citation type="journal article" date="2008" name="J. Proteome Res.">
        <title>Phosphoproteome analysis of fission yeast.</title>
        <authorList>
            <person name="Wilson-Grady J.T."/>
            <person name="Villen J."/>
            <person name="Gygi S.P."/>
        </authorList>
    </citation>
    <scope>PHOSPHORYLATION [LARGE SCALE ANALYSIS] AT SER-129</scope>
    <scope>IDENTIFICATION BY MASS SPECTROMETRY</scope>
</reference>